<protein>
    <recommendedName>
        <fullName evidence="1">Orotate phosphoribosyltransferase</fullName>
        <shortName evidence="1">OPRT</shortName>
        <shortName evidence="1">OPRTase</shortName>
        <ecNumber evidence="1">2.4.2.10</ecNumber>
    </recommendedName>
</protein>
<dbReference type="EC" id="2.4.2.10" evidence="1"/>
<dbReference type="EMBL" id="AP008229">
    <property type="protein sequence ID" value="BAE67229.1"/>
    <property type="molecule type" value="Genomic_DNA"/>
</dbReference>
<dbReference type="RefSeq" id="WP_011257434.1">
    <property type="nucleotide sequence ID" value="NC_007705.1"/>
</dbReference>
<dbReference type="SMR" id="Q2P898"/>
<dbReference type="KEGG" id="xom:XOO0474"/>
<dbReference type="HOGENOM" id="CLU_074878_0_1_6"/>
<dbReference type="UniPathway" id="UPA00070">
    <property type="reaction ID" value="UER00119"/>
</dbReference>
<dbReference type="GO" id="GO:0005737">
    <property type="term" value="C:cytoplasm"/>
    <property type="evidence" value="ECO:0007669"/>
    <property type="project" value="TreeGrafter"/>
</dbReference>
<dbReference type="GO" id="GO:0000287">
    <property type="term" value="F:magnesium ion binding"/>
    <property type="evidence" value="ECO:0007669"/>
    <property type="project" value="UniProtKB-UniRule"/>
</dbReference>
<dbReference type="GO" id="GO:0004588">
    <property type="term" value="F:orotate phosphoribosyltransferase activity"/>
    <property type="evidence" value="ECO:0007669"/>
    <property type="project" value="UniProtKB-UniRule"/>
</dbReference>
<dbReference type="GO" id="GO:0006207">
    <property type="term" value="P:'de novo' pyrimidine nucleobase biosynthetic process"/>
    <property type="evidence" value="ECO:0007669"/>
    <property type="project" value="TreeGrafter"/>
</dbReference>
<dbReference type="GO" id="GO:0044205">
    <property type="term" value="P:'de novo' UMP biosynthetic process"/>
    <property type="evidence" value="ECO:0007669"/>
    <property type="project" value="UniProtKB-UniRule"/>
</dbReference>
<dbReference type="GO" id="GO:0046132">
    <property type="term" value="P:pyrimidine ribonucleoside biosynthetic process"/>
    <property type="evidence" value="ECO:0007669"/>
    <property type="project" value="TreeGrafter"/>
</dbReference>
<dbReference type="CDD" id="cd06223">
    <property type="entry name" value="PRTases_typeI"/>
    <property type="match status" value="1"/>
</dbReference>
<dbReference type="FunFam" id="3.40.50.2020:FF:000052">
    <property type="entry name" value="Orotate phosphoribosyltransferase"/>
    <property type="match status" value="1"/>
</dbReference>
<dbReference type="Gene3D" id="3.40.50.2020">
    <property type="match status" value="1"/>
</dbReference>
<dbReference type="HAMAP" id="MF_01208">
    <property type="entry name" value="PyrE"/>
    <property type="match status" value="1"/>
</dbReference>
<dbReference type="InterPro" id="IPR023031">
    <property type="entry name" value="OPRT"/>
</dbReference>
<dbReference type="InterPro" id="IPR004467">
    <property type="entry name" value="Or_phspho_trans_dom"/>
</dbReference>
<dbReference type="InterPro" id="IPR000836">
    <property type="entry name" value="PRibTrfase_dom"/>
</dbReference>
<dbReference type="InterPro" id="IPR029057">
    <property type="entry name" value="PRTase-like"/>
</dbReference>
<dbReference type="NCBIfam" id="TIGR00336">
    <property type="entry name" value="pyrE"/>
    <property type="match status" value="1"/>
</dbReference>
<dbReference type="PANTHER" id="PTHR46683">
    <property type="entry name" value="OROTATE PHOSPHORIBOSYLTRANSFERASE 1-RELATED"/>
    <property type="match status" value="1"/>
</dbReference>
<dbReference type="PANTHER" id="PTHR46683:SF1">
    <property type="entry name" value="OROTATE PHOSPHORIBOSYLTRANSFERASE 1-RELATED"/>
    <property type="match status" value="1"/>
</dbReference>
<dbReference type="Pfam" id="PF00156">
    <property type="entry name" value="Pribosyltran"/>
    <property type="match status" value="1"/>
</dbReference>
<dbReference type="SUPFAM" id="SSF53271">
    <property type="entry name" value="PRTase-like"/>
    <property type="match status" value="1"/>
</dbReference>
<dbReference type="PROSITE" id="PS00103">
    <property type="entry name" value="PUR_PYR_PR_TRANSFER"/>
    <property type="match status" value="1"/>
</dbReference>
<sequence>MTDHRTRFLQLALGADALRFGQFTLKSGRLSPYFFNAGRFDSGTKTAQLAQCYADAIDAAGVDFDLLFGPAYKGIPLATALACAYAGRGRDLPLAFNRKEAKDHGEGGTLIGAPLAGHKVLIVDDVITAGTAIREALGIIRAAGGVPSGIVVALDRQEIASEQDRRSAAQAVATEAGIPVIAVANLSDLLAFAAENADLVDFREPLLAYRGRYGTDTTG</sequence>
<accession>Q2P898</accession>
<proteinExistence type="inferred from homology"/>
<evidence type="ECO:0000255" key="1">
    <source>
        <dbReference type="HAMAP-Rule" id="MF_01208"/>
    </source>
</evidence>
<name>PYRE_XANOM</name>
<feature type="chain" id="PRO_1000066326" description="Orotate phosphoribosyltransferase">
    <location>
        <begin position="1"/>
        <end position="219"/>
    </location>
</feature>
<feature type="binding site" description="in other chain" evidence="1">
    <location>
        <position position="26"/>
    </location>
    <ligand>
        <name>5-phospho-alpha-D-ribose 1-diphosphate</name>
        <dbReference type="ChEBI" id="CHEBI:58017"/>
        <note>ligand shared between dimeric partners</note>
    </ligand>
</feature>
<feature type="binding site" evidence="1">
    <location>
        <begin position="34"/>
        <end position="35"/>
    </location>
    <ligand>
        <name>orotate</name>
        <dbReference type="ChEBI" id="CHEBI:30839"/>
    </ligand>
</feature>
<feature type="binding site" description="in other chain" evidence="1">
    <location>
        <begin position="72"/>
        <end position="73"/>
    </location>
    <ligand>
        <name>5-phospho-alpha-D-ribose 1-diphosphate</name>
        <dbReference type="ChEBI" id="CHEBI:58017"/>
        <note>ligand shared between dimeric partners</note>
    </ligand>
</feature>
<feature type="binding site" evidence="1">
    <location>
        <position position="98"/>
    </location>
    <ligand>
        <name>5-phospho-alpha-D-ribose 1-diphosphate</name>
        <dbReference type="ChEBI" id="CHEBI:58017"/>
        <note>ligand shared between dimeric partners</note>
    </ligand>
</feature>
<feature type="binding site" description="in other chain" evidence="1">
    <location>
        <position position="99"/>
    </location>
    <ligand>
        <name>5-phospho-alpha-D-ribose 1-diphosphate</name>
        <dbReference type="ChEBI" id="CHEBI:58017"/>
        <note>ligand shared between dimeric partners</note>
    </ligand>
</feature>
<feature type="binding site" evidence="1">
    <location>
        <position position="102"/>
    </location>
    <ligand>
        <name>5-phospho-alpha-D-ribose 1-diphosphate</name>
        <dbReference type="ChEBI" id="CHEBI:58017"/>
        <note>ligand shared between dimeric partners</note>
    </ligand>
</feature>
<feature type="binding site" evidence="1">
    <location>
        <position position="104"/>
    </location>
    <ligand>
        <name>5-phospho-alpha-D-ribose 1-diphosphate</name>
        <dbReference type="ChEBI" id="CHEBI:58017"/>
        <note>ligand shared between dimeric partners</note>
    </ligand>
</feature>
<feature type="binding site" description="in other chain" evidence="1">
    <location>
        <begin position="124"/>
        <end position="132"/>
    </location>
    <ligand>
        <name>5-phospho-alpha-D-ribose 1-diphosphate</name>
        <dbReference type="ChEBI" id="CHEBI:58017"/>
        <note>ligand shared between dimeric partners</note>
    </ligand>
</feature>
<feature type="binding site" evidence="1">
    <location>
        <position position="128"/>
    </location>
    <ligand>
        <name>orotate</name>
        <dbReference type="ChEBI" id="CHEBI:30839"/>
    </ligand>
</feature>
<feature type="binding site" evidence="1">
    <location>
        <position position="156"/>
    </location>
    <ligand>
        <name>orotate</name>
        <dbReference type="ChEBI" id="CHEBI:30839"/>
    </ligand>
</feature>
<reference key="1">
    <citation type="journal article" date="2005" name="Jpn. Agric. Res. Q.">
        <title>Genome sequence of Xanthomonas oryzae pv. oryzae suggests contribution of large numbers of effector genes and insertion sequences to its race diversity.</title>
        <authorList>
            <person name="Ochiai H."/>
            <person name="Inoue Y."/>
            <person name="Takeya M."/>
            <person name="Sasaki A."/>
            <person name="Kaku H."/>
        </authorList>
    </citation>
    <scope>NUCLEOTIDE SEQUENCE [LARGE SCALE GENOMIC DNA]</scope>
    <source>
        <strain>MAFF 311018</strain>
    </source>
</reference>
<organism>
    <name type="scientific">Xanthomonas oryzae pv. oryzae (strain MAFF 311018)</name>
    <dbReference type="NCBI Taxonomy" id="342109"/>
    <lineage>
        <taxon>Bacteria</taxon>
        <taxon>Pseudomonadati</taxon>
        <taxon>Pseudomonadota</taxon>
        <taxon>Gammaproteobacteria</taxon>
        <taxon>Lysobacterales</taxon>
        <taxon>Lysobacteraceae</taxon>
        <taxon>Xanthomonas</taxon>
    </lineage>
</organism>
<gene>
    <name evidence="1" type="primary">pyrE</name>
    <name type="ordered locus">XOO0474</name>
</gene>
<comment type="function">
    <text evidence="1">Catalyzes the transfer of a ribosyl phosphate group from 5-phosphoribose 1-diphosphate to orotate, leading to the formation of orotidine monophosphate (OMP).</text>
</comment>
<comment type="catalytic activity">
    <reaction evidence="1">
        <text>orotidine 5'-phosphate + diphosphate = orotate + 5-phospho-alpha-D-ribose 1-diphosphate</text>
        <dbReference type="Rhea" id="RHEA:10380"/>
        <dbReference type="ChEBI" id="CHEBI:30839"/>
        <dbReference type="ChEBI" id="CHEBI:33019"/>
        <dbReference type="ChEBI" id="CHEBI:57538"/>
        <dbReference type="ChEBI" id="CHEBI:58017"/>
        <dbReference type="EC" id="2.4.2.10"/>
    </reaction>
</comment>
<comment type="cofactor">
    <cofactor evidence="1">
        <name>Mg(2+)</name>
        <dbReference type="ChEBI" id="CHEBI:18420"/>
    </cofactor>
</comment>
<comment type="pathway">
    <text evidence="1">Pyrimidine metabolism; UMP biosynthesis via de novo pathway; UMP from orotate: step 1/2.</text>
</comment>
<comment type="subunit">
    <text evidence="1">Homodimer.</text>
</comment>
<comment type="similarity">
    <text evidence="1">Belongs to the purine/pyrimidine phosphoribosyltransferase family. PyrE subfamily.</text>
</comment>
<keyword id="KW-0328">Glycosyltransferase</keyword>
<keyword id="KW-0460">Magnesium</keyword>
<keyword id="KW-0665">Pyrimidine biosynthesis</keyword>
<keyword id="KW-0808">Transferase</keyword>